<name>YAFD_SALNS</name>
<evidence type="ECO:0000255" key="1">
    <source>
        <dbReference type="HAMAP-Rule" id="MF_01119"/>
    </source>
</evidence>
<sequence length="266" mass="29931">MRKNTYAMRYVAGQPAERILPPGSFASIGQALPAGEPLSNEERIRILVWNIFKQQRAEWLSVLKNYGKDAHLVLLQEAQTTPELVQFATANYLAADQVPAFVLPQHPSGVMTLSAAHPVYCCPLREREPILRLAKSALVTVYPLPDTRLLMVVNVHAVNFSLGVDVYSKQLLPIGDQIAHHSGPVIMAGDFNAWSRPRMNALYRFAREMSLRQVRFTDDQRRRAFGRPLDFVFYRGLNVNEASVLVTRASDHNPLLVEFSPGKPEQ</sequence>
<comment type="subcellular location">
    <subcellularLocation>
        <location evidence="1">Cytoplasm</location>
    </subcellularLocation>
</comment>
<comment type="similarity">
    <text evidence="1">Belongs to the UPF0294 family.</text>
</comment>
<keyword id="KW-0963">Cytoplasm</keyword>
<organism>
    <name type="scientific">Salmonella newport (strain SL254)</name>
    <dbReference type="NCBI Taxonomy" id="423368"/>
    <lineage>
        <taxon>Bacteria</taxon>
        <taxon>Pseudomonadati</taxon>
        <taxon>Pseudomonadota</taxon>
        <taxon>Gammaproteobacteria</taxon>
        <taxon>Enterobacterales</taxon>
        <taxon>Enterobacteriaceae</taxon>
        <taxon>Salmonella</taxon>
    </lineage>
</organism>
<accession>B4SV34</accession>
<feature type="chain" id="PRO_1000137250" description="UPF0294 protein YafD">
    <location>
        <begin position="1"/>
        <end position="266"/>
    </location>
</feature>
<protein>
    <recommendedName>
        <fullName evidence="1">UPF0294 protein YafD</fullName>
    </recommendedName>
</protein>
<reference key="1">
    <citation type="journal article" date="2011" name="J. Bacteriol.">
        <title>Comparative genomics of 28 Salmonella enterica isolates: evidence for CRISPR-mediated adaptive sublineage evolution.</title>
        <authorList>
            <person name="Fricke W.F."/>
            <person name="Mammel M.K."/>
            <person name="McDermott P.F."/>
            <person name="Tartera C."/>
            <person name="White D.G."/>
            <person name="Leclerc J.E."/>
            <person name="Ravel J."/>
            <person name="Cebula T.A."/>
        </authorList>
    </citation>
    <scope>NUCLEOTIDE SEQUENCE [LARGE SCALE GENOMIC DNA]</scope>
    <source>
        <strain>SL254</strain>
    </source>
</reference>
<dbReference type="EMBL" id="CP001113">
    <property type="protein sequence ID" value="ACF61644.1"/>
    <property type="molecule type" value="Genomic_DNA"/>
</dbReference>
<dbReference type="RefSeq" id="WP_001230968.1">
    <property type="nucleotide sequence ID" value="NZ_CCMR01000003.1"/>
</dbReference>
<dbReference type="SMR" id="B4SV34"/>
<dbReference type="KEGG" id="see:SNSL254_A0283"/>
<dbReference type="HOGENOM" id="CLU_083563_0_0_6"/>
<dbReference type="Proteomes" id="UP000008824">
    <property type="component" value="Chromosome"/>
</dbReference>
<dbReference type="GO" id="GO:0005737">
    <property type="term" value="C:cytoplasm"/>
    <property type="evidence" value="ECO:0007669"/>
    <property type="project" value="UniProtKB-SubCell"/>
</dbReference>
<dbReference type="GO" id="GO:0003824">
    <property type="term" value="F:catalytic activity"/>
    <property type="evidence" value="ECO:0007669"/>
    <property type="project" value="InterPro"/>
</dbReference>
<dbReference type="Gene3D" id="3.60.10.10">
    <property type="entry name" value="Endonuclease/exonuclease/phosphatase"/>
    <property type="match status" value="1"/>
</dbReference>
<dbReference type="HAMAP" id="MF_01119">
    <property type="entry name" value="UPF0294"/>
    <property type="match status" value="1"/>
</dbReference>
<dbReference type="InterPro" id="IPR036691">
    <property type="entry name" value="Endo/exonu/phosph_ase_sf"/>
</dbReference>
<dbReference type="InterPro" id="IPR005135">
    <property type="entry name" value="Endo/exonuclease/phosphatase"/>
</dbReference>
<dbReference type="InterPro" id="IPR022958">
    <property type="entry name" value="UPF0294"/>
</dbReference>
<dbReference type="NCBIfam" id="NF003839">
    <property type="entry name" value="PRK05421.1-1"/>
    <property type="match status" value="1"/>
</dbReference>
<dbReference type="NCBIfam" id="NF003840">
    <property type="entry name" value="PRK05421.1-2"/>
    <property type="match status" value="1"/>
</dbReference>
<dbReference type="NCBIfam" id="NF003841">
    <property type="entry name" value="PRK05421.1-3"/>
    <property type="match status" value="1"/>
</dbReference>
<dbReference type="NCBIfam" id="NF003842">
    <property type="entry name" value="PRK05421.1-4"/>
    <property type="match status" value="1"/>
</dbReference>
<dbReference type="Pfam" id="PF03372">
    <property type="entry name" value="Exo_endo_phos"/>
    <property type="match status" value="1"/>
</dbReference>
<dbReference type="SUPFAM" id="SSF56219">
    <property type="entry name" value="DNase I-like"/>
    <property type="match status" value="1"/>
</dbReference>
<proteinExistence type="inferred from homology"/>
<gene>
    <name evidence="1" type="primary">yafD</name>
    <name type="ordered locus">SNSL254_A0283</name>
</gene>